<protein>
    <recommendedName>
        <fullName>Elongation factor Tu, mitochondrial</fullName>
    </recommendedName>
    <alternativeName>
        <fullName>tufM</fullName>
    </alternativeName>
</protein>
<sequence length="426" mass="46778">MFKNLAGSFRAVSRVAFKTRPSLVRSYAAFDRSKPHVNIGTIGHVDHGKTTLTAAITKVLSEKGGANFLDYGSIDRAPEERARGITISTAHVEYQTDKRHYAHVDCPGHADYIKNMITGAAQMDGAIIVVAATDGQMPQTREHLLLARQVGVQHLVVFVNKVDTIDDPEMLELVEMEMRELLSQYGFDGDNTPVIMGSALCALESKQPEIGVQAIEKLLDAVDEHIPTPTRDLEQPFLLPVEDVFSISGRGTVVTGRVERGSLKKGEEIEIVGDFDKPFKTTVTGIEMFKKELDAAMAGDNAGILLRGVKRDDVKRGMVLAKPSTVTSHKKVLASLYILSKEEGGRHSPFGENYKPQLFIRTTDVTGTLRFPAGEGVDHSQMVMPGDNVEMEIELVRKTPLEVNQRFNIREGGKTVGTGLVTRIIE</sequence>
<feature type="transit peptide" description="Mitochondrion" evidence="2">
    <location>
        <begin position="1"/>
        <end position="27"/>
    </location>
</feature>
<feature type="chain" id="PRO_0000295031" description="Elongation factor Tu, mitochondrial">
    <location>
        <begin position="28"/>
        <end position="426"/>
    </location>
</feature>
<feature type="domain" description="tr-type G">
    <location>
        <begin position="34"/>
        <end position="230"/>
    </location>
</feature>
<feature type="region of interest" description="G1" evidence="1">
    <location>
        <begin position="43"/>
        <end position="50"/>
    </location>
</feature>
<feature type="region of interest" description="G2" evidence="1">
    <location>
        <begin position="84"/>
        <end position="88"/>
    </location>
</feature>
<feature type="region of interest" description="G3" evidence="1">
    <location>
        <begin position="105"/>
        <end position="108"/>
    </location>
</feature>
<feature type="region of interest" description="G4" evidence="1">
    <location>
        <begin position="160"/>
        <end position="163"/>
    </location>
</feature>
<feature type="region of interest" description="G5" evidence="1">
    <location>
        <begin position="198"/>
        <end position="200"/>
    </location>
</feature>
<feature type="binding site" evidence="1">
    <location>
        <begin position="43"/>
        <end position="50"/>
    </location>
    <ligand>
        <name>GTP</name>
        <dbReference type="ChEBI" id="CHEBI:37565"/>
    </ligand>
</feature>
<feature type="binding site" evidence="1">
    <location>
        <begin position="105"/>
        <end position="109"/>
    </location>
    <ligand>
        <name>GTP</name>
        <dbReference type="ChEBI" id="CHEBI:37565"/>
    </ligand>
</feature>
<feature type="binding site" evidence="1">
    <location>
        <begin position="160"/>
        <end position="163"/>
    </location>
    <ligand>
        <name>GTP</name>
        <dbReference type="ChEBI" id="CHEBI:37565"/>
    </ligand>
</feature>
<organism>
    <name type="scientific">Meyerozyma guilliermondii (strain ATCC 6260 / CBS 566 / DSM 6381 / JCM 1539 / NBRC 10279 / NRRL Y-324)</name>
    <name type="common">Yeast</name>
    <name type="synonym">Candida guilliermondii</name>
    <dbReference type="NCBI Taxonomy" id="294746"/>
    <lineage>
        <taxon>Eukaryota</taxon>
        <taxon>Fungi</taxon>
        <taxon>Dikarya</taxon>
        <taxon>Ascomycota</taxon>
        <taxon>Saccharomycotina</taxon>
        <taxon>Pichiomycetes</taxon>
        <taxon>Debaryomycetaceae</taxon>
        <taxon>Meyerozyma</taxon>
    </lineage>
</organism>
<proteinExistence type="inferred from homology"/>
<reference key="1">
    <citation type="journal article" date="2009" name="Nature">
        <title>Evolution of pathogenicity and sexual reproduction in eight Candida genomes.</title>
        <authorList>
            <person name="Butler G."/>
            <person name="Rasmussen M.D."/>
            <person name="Lin M.F."/>
            <person name="Santos M.A.S."/>
            <person name="Sakthikumar S."/>
            <person name="Munro C.A."/>
            <person name="Rheinbay E."/>
            <person name="Grabherr M."/>
            <person name="Forche A."/>
            <person name="Reedy J.L."/>
            <person name="Agrafioti I."/>
            <person name="Arnaud M.B."/>
            <person name="Bates S."/>
            <person name="Brown A.J.P."/>
            <person name="Brunke S."/>
            <person name="Costanzo M.C."/>
            <person name="Fitzpatrick D.A."/>
            <person name="de Groot P.W.J."/>
            <person name="Harris D."/>
            <person name="Hoyer L.L."/>
            <person name="Hube B."/>
            <person name="Klis F.M."/>
            <person name="Kodira C."/>
            <person name="Lennard N."/>
            <person name="Logue M.E."/>
            <person name="Martin R."/>
            <person name="Neiman A.M."/>
            <person name="Nikolaou E."/>
            <person name="Quail M.A."/>
            <person name="Quinn J."/>
            <person name="Santos M.C."/>
            <person name="Schmitzberger F.F."/>
            <person name="Sherlock G."/>
            <person name="Shah P."/>
            <person name="Silverstein K.A.T."/>
            <person name="Skrzypek M.S."/>
            <person name="Soll D."/>
            <person name="Staggs R."/>
            <person name="Stansfield I."/>
            <person name="Stumpf M.P.H."/>
            <person name="Sudbery P.E."/>
            <person name="Srikantha T."/>
            <person name="Zeng Q."/>
            <person name="Berman J."/>
            <person name="Berriman M."/>
            <person name="Heitman J."/>
            <person name="Gow N.A.R."/>
            <person name="Lorenz M.C."/>
            <person name="Birren B.W."/>
            <person name="Kellis M."/>
            <person name="Cuomo C.A."/>
        </authorList>
    </citation>
    <scope>NUCLEOTIDE SEQUENCE [LARGE SCALE GENOMIC DNA]</scope>
    <source>
        <strain>ATCC 6260 / CBS 566 / DSM 6381 / JCM 1539 / NBRC 10279 / NRRL Y-324</strain>
    </source>
</reference>
<reference key="2">
    <citation type="submission" date="2006-03" db="EMBL/GenBank/DDBJ databases">
        <authorList>
            <person name="Piche Y."/>
            <person name="Boissinot M."/>
            <person name="Boudreau D.K."/>
            <person name="Trepanier H."/>
            <person name="Boily M.-J."/>
            <person name="Picard F.J."/>
            <person name="Ouellette M."/>
            <person name="Roy P.H."/>
            <person name="Bergeron M.G."/>
        </authorList>
    </citation>
    <scope>NUCLEOTIDE SEQUENCE [GENOMIC DNA] OF 133-371</scope>
    <source>
        <strain>ATCC 6260 / CBS 566 / DSM 6381 / JCM 1539 / NBRC 10279 / NRRL Y-324</strain>
    </source>
</reference>
<accession>A5DN78</accession>
<accession>Q0ZIA9</accession>
<gene>
    <name type="primary">TUF1</name>
    <name type="ORF">PGUG_04729</name>
</gene>
<comment type="function">
    <text evidence="1">G-protein that, in its active GTP-bound form, binds to and delivers aminoacyl-tRNA to the A-site of ribosomes during protein biosynthesis. In the presence of a correct codon-anticodon match between the aminoacyl-tRNA and the A-site codon of the ribosome-bound mRNA, the ribosome acts as a GTPase activator and the GTP is hydrolyzed. The inactive GDP-bound form leaves the ribosome and must be recycled before binding another molecule of aminoacyl-tRNA. Required for mitochondrial protein biosynthesis and maintenance of mitochondrial DNA (By similarity).</text>
</comment>
<comment type="pathway">
    <text>Protein biosynthesis; polypeptide chain elongation.</text>
</comment>
<comment type="subcellular location">
    <subcellularLocation>
        <location evidence="1">Mitochondrion</location>
    </subcellularLocation>
</comment>
<comment type="similarity">
    <text evidence="3">Belongs to the TRAFAC class translation factor GTPase superfamily. Classic translation factor GTPase family. EF-Tu/EF-1A subfamily.</text>
</comment>
<evidence type="ECO:0000250" key="1"/>
<evidence type="ECO:0000255" key="2"/>
<evidence type="ECO:0000305" key="3"/>
<dbReference type="EMBL" id="CH408160">
    <property type="protein sequence ID" value="EDK40631.1"/>
    <property type="molecule type" value="Genomic_DNA"/>
</dbReference>
<dbReference type="EMBL" id="DQ447250">
    <property type="protein sequence ID" value="ABE27744.1"/>
    <property type="molecule type" value="Genomic_DNA"/>
</dbReference>
<dbReference type="RefSeq" id="XP_001482774.1">
    <property type="nucleotide sequence ID" value="XM_001482724.1"/>
</dbReference>
<dbReference type="SMR" id="A5DN78"/>
<dbReference type="FunCoup" id="A5DN78">
    <property type="interactions" value="852"/>
</dbReference>
<dbReference type="STRING" id="294746.A5DN78"/>
<dbReference type="GeneID" id="5124936"/>
<dbReference type="KEGG" id="pgu:PGUG_04729"/>
<dbReference type="VEuPathDB" id="FungiDB:PGUG_04729"/>
<dbReference type="eggNOG" id="KOG0460">
    <property type="taxonomic scope" value="Eukaryota"/>
</dbReference>
<dbReference type="HOGENOM" id="CLU_007265_0_0_1"/>
<dbReference type="InParanoid" id="A5DN78"/>
<dbReference type="OMA" id="EGDKEWG"/>
<dbReference type="OrthoDB" id="2067at2759"/>
<dbReference type="UniPathway" id="UPA00345"/>
<dbReference type="Proteomes" id="UP000001997">
    <property type="component" value="Unassembled WGS sequence"/>
</dbReference>
<dbReference type="GO" id="GO:0005739">
    <property type="term" value="C:mitochondrion"/>
    <property type="evidence" value="ECO:0007669"/>
    <property type="project" value="UniProtKB-SubCell"/>
</dbReference>
<dbReference type="GO" id="GO:0005525">
    <property type="term" value="F:GTP binding"/>
    <property type="evidence" value="ECO:0007669"/>
    <property type="project" value="UniProtKB-KW"/>
</dbReference>
<dbReference type="GO" id="GO:0003924">
    <property type="term" value="F:GTPase activity"/>
    <property type="evidence" value="ECO:0007669"/>
    <property type="project" value="EnsemblFungi"/>
</dbReference>
<dbReference type="GO" id="GO:0003746">
    <property type="term" value="F:translation elongation factor activity"/>
    <property type="evidence" value="ECO:0007669"/>
    <property type="project" value="UniProtKB-KW"/>
</dbReference>
<dbReference type="GO" id="GO:0070125">
    <property type="term" value="P:mitochondrial translational elongation"/>
    <property type="evidence" value="ECO:0007669"/>
    <property type="project" value="EnsemblFungi"/>
</dbReference>
<dbReference type="CDD" id="cd01884">
    <property type="entry name" value="EF_Tu"/>
    <property type="match status" value="1"/>
</dbReference>
<dbReference type="CDD" id="cd03697">
    <property type="entry name" value="EFTU_II"/>
    <property type="match status" value="1"/>
</dbReference>
<dbReference type="CDD" id="cd03707">
    <property type="entry name" value="EFTU_III"/>
    <property type="match status" value="1"/>
</dbReference>
<dbReference type="FunFam" id="2.40.30.10:FF:000001">
    <property type="entry name" value="Elongation factor Tu"/>
    <property type="match status" value="1"/>
</dbReference>
<dbReference type="FunFam" id="3.40.50.300:FF:000003">
    <property type="entry name" value="Elongation factor Tu"/>
    <property type="match status" value="1"/>
</dbReference>
<dbReference type="Gene3D" id="3.40.50.300">
    <property type="entry name" value="P-loop containing nucleotide triphosphate hydrolases"/>
    <property type="match status" value="1"/>
</dbReference>
<dbReference type="Gene3D" id="2.40.30.10">
    <property type="entry name" value="Translation factors"/>
    <property type="match status" value="2"/>
</dbReference>
<dbReference type="HAMAP" id="MF_00118_B">
    <property type="entry name" value="EF_Tu_B"/>
    <property type="match status" value="1"/>
</dbReference>
<dbReference type="InterPro" id="IPR041709">
    <property type="entry name" value="EF-Tu_GTP-bd"/>
</dbReference>
<dbReference type="InterPro" id="IPR050055">
    <property type="entry name" value="EF-Tu_GTPase"/>
</dbReference>
<dbReference type="InterPro" id="IPR004161">
    <property type="entry name" value="EFTu-like_2"/>
</dbReference>
<dbReference type="InterPro" id="IPR033720">
    <property type="entry name" value="EFTU_2"/>
</dbReference>
<dbReference type="InterPro" id="IPR031157">
    <property type="entry name" value="G_TR_CS"/>
</dbReference>
<dbReference type="InterPro" id="IPR027417">
    <property type="entry name" value="P-loop_NTPase"/>
</dbReference>
<dbReference type="InterPro" id="IPR005225">
    <property type="entry name" value="Small_GTP-bd"/>
</dbReference>
<dbReference type="InterPro" id="IPR000795">
    <property type="entry name" value="T_Tr_GTP-bd_dom"/>
</dbReference>
<dbReference type="InterPro" id="IPR009000">
    <property type="entry name" value="Transl_B-barrel_sf"/>
</dbReference>
<dbReference type="InterPro" id="IPR009001">
    <property type="entry name" value="Transl_elong_EF1A/Init_IF2_C"/>
</dbReference>
<dbReference type="InterPro" id="IPR004541">
    <property type="entry name" value="Transl_elong_EFTu/EF1A_bac/org"/>
</dbReference>
<dbReference type="InterPro" id="IPR004160">
    <property type="entry name" value="Transl_elong_EFTu/EF1A_C"/>
</dbReference>
<dbReference type="NCBIfam" id="TIGR00485">
    <property type="entry name" value="EF-Tu"/>
    <property type="match status" value="1"/>
</dbReference>
<dbReference type="NCBIfam" id="NF000766">
    <property type="entry name" value="PRK00049.1"/>
    <property type="match status" value="1"/>
</dbReference>
<dbReference type="NCBIfam" id="NF009372">
    <property type="entry name" value="PRK12735.1"/>
    <property type="match status" value="1"/>
</dbReference>
<dbReference type="NCBIfam" id="NF009373">
    <property type="entry name" value="PRK12736.1"/>
    <property type="match status" value="1"/>
</dbReference>
<dbReference type="NCBIfam" id="TIGR00231">
    <property type="entry name" value="small_GTP"/>
    <property type="match status" value="1"/>
</dbReference>
<dbReference type="PANTHER" id="PTHR43721:SF36">
    <property type="entry name" value="ELONGATION FACTOR TU, MITOCHONDRIAL"/>
    <property type="match status" value="1"/>
</dbReference>
<dbReference type="PANTHER" id="PTHR43721">
    <property type="entry name" value="ELONGATION FACTOR TU-RELATED"/>
    <property type="match status" value="1"/>
</dbReference>
<dbReference type="Pfam" id="PF00009">
    <property type="entry name" value="GTP_EFTU"/>
    <property type="match status" value="1"/>
</dbReference>
<dbReference type="Pfam" id="PF03144">
    <property type="entry name" value="GTP_EFTU_D2"/>
    <property type="match status" value="1"/>
</dbReference>
<dbReference type="Pfam" id="PF03143">
    <property type="entry name" value="GTP_EFTU_D3"/>
    <property type="match status" value="1"/>
</dbReference>
<dbReference type="PRINTS" id="PR00315">
    <property type="entry name" value="ELONGATNFCT"/>
</dbReference>
<dbReference type="SUPFAM" id="SSF50465">
    <property type="entry name" value="EF-Tu/eEF-1alpha/eIF2-gamma C-terminal domain"/>
    <property type="match status" value="1"/>
</dbReference>
<dbReference type="SUPFAM" id="SSF52540">
    <property type="entry name" value="P-loop containing nucleoside triphosphate hydrolases"/>
    <property type="match status" value="1"/>
</dbReference>
<dbReference type="SUPFAM" id="SSF50447">
    <property type="entry name" value="Translation proteins"/>
    <property type="match status" value="1"/>
</dbReference>
<dbReference type="PROSITE" id="PS00301">
    <property type="entry name" value="G_TR_1"/>
    <property type="match status" value="1"/>
</dbReference>
<dbReference type="PROSITE" id="PS51722">
    <property type="entry name" value="G_TR_2"/>
    <property type="match status" value="1"/>
</dbReference>
<name>EFTU_PICGU</name>
<keyword id="KW-0251">Elongation factor</keyword>
<keyword id="KW-0342">GTP-binding</keyword>
<keyword id="KW-0496">Mitochondrion</keyword>
<keyword id="KW-0547">Nucleotide-binding</keyword>
<keyword id="KW-0648">Protein biosynthesis</keyword>
<keyword id="KW-1185">Reference proteome</keyword>
<keyword id="KW-0809">Transit peptide</keyword>